<keyword id="KW-0067">ATP-binding</keyword>
<keyword id="KW-0963">Cytoplasm</keyword>
<keyword id="KW-0275">Fatty acid biosynthesis</keyword>
<keyword id="KW-0276">Fatty acid metabolism</keyword>
<keyword id="KW-0444">Lipid biosynthesis</keyword>
<keyword id="KW-0443">Lipid metabolism</keyword>
<keyword id="KW-0547">Nucleotide-binding</keyword>
<keyword id="KW-1185">Reference proteome</keyword>
<keyword id="KW-0808">Transferase</keyword>
<accession>B7UJ86</accession>
<gene>
    <name evidence="1" type="primary">accA</name>
    <name type="ordered locus">E2348C_0190</name>
</gene>
<sequence length="319" mass="35288">MSLNFLDFEQPIAELEAKIDSLTAVSRQDEKLDINIDEEVHRLREKSVELTRKIFADLGAWQIAQLARHPQRPYTLDYVRLAFDEFDELAGDRAYADDKAIVGGIARLDGRPVMIIGHQKGRETKEKIRRNFGMPAPEGYRKALRLMQMAERFKMPIITFIDTPGAYPGVGAEERGQSEAIARNLREMSRLSVPTICTVIGEGGSGGALAIGVGDKVNMLQYSTYSVISPEGCASILWKSADKAPLAAEAMGIIAPRLKELKLIDSIIPEPLGGAHRNPEAMAASLKAQLLADLADLDVLSTEDLKNRRYQRLMSYGYA</sequence>
<evidence type="ECO:0000255" key="1">
    <source>
        <dbReference type="HAMAP-Rule" id="MF_00823"/>
    </source>
</evidence>
<evidence type="ECO:0000255" key="2">
    <source>
        <dbReference type="PROSITE-ProRule" id="PRU01137"/>
    </source>
</evidence>
<name>ACCA_ECO27</name>
<protein>
    <recommendedName>
        <fullName evidence="1">Acetyl-coenzyme A carboxylase carboxyl transferase subunit alpha</fullName>
        <shortName evidence="1">ACCase subunit alpha</shortName>
        <shortName evidence="1">Acetyl-CoA carboxylase carboxyltransferase subunit alpha</shortName>
        <ecNumber evidence="1">2.1.3.15</ecNumber>
    </recommendedName>
</protein>
<organism>
    <name type="scientific">Escherichia coli O127:H6 (strain E2348/69 / EPEC)</name>
    <dbReference type="NCBI Taxonomy" id="574521"/>
    <lineage>
        <taxon>Bacteria</taxon>
        <taxon>Pseudomonadati</taxon>
        <taxon>Pseudomonadota</taxon>
        <taxon>Gammaproteobacteria</taxon>
        <taxon>Enterobacterales</taxon>
        <taxon>Enterobacteriaceae</taxon>
        <taxon>Escherichia</taxon>
    </lineage>
</organism>
<feature type="chain" id="PRO_1000148740" description="Acetyl-coenzyme A carboxylase carboxyl transferase subunit alpha">
    <location>
        <begin position="1"/>
        <end position="319"/>
    </location>
</feature>
<feature type="domain" description="CoA carboxyltransferase C-terminal" evidence="2">
    <location>
        <begin position="35"/>
        <end position="296"/>
    </location>
</feature>
<dbReference type="EC" id="2.1.3.15" evidence="1"/>
<dbReference type="EMBL" id="FM180568">
    <property type="protein sequence ID" value="CAS07738.1"/>
    <property type="molecule type" value="Genomic_DNA"/>
</dbReference>
<dbReference type="RefSeq" id="WP_000055746.1">
    <property type="nucleotide sequence ID" value="NC_011601.1"/>
</dbReference>
<dbReference type="SMR" id="B7UJ86"/>
<dbReference type="GeneID" id="86862695"/>
<dbReference type="KEGG" id="ecg:E2348C_0190"/>
<dbReference type="HOGENOM" id="CLU_015486_0_2_6"/>
<dbReference type="UniPathway" id="UPA00655">
    <property type="reaction ID" value="UER00711"/>
</dbReference>
<dbReference type="Proteomes" id="UP000008205">
    <property type="component" value="Chromosome"/>
</dbReference>
<dbReference type="GO" id="GO:0009317">
    <property type="term" value="C:acetyl-CoA carboxylase complex"/>
    <property type="evidence" value="ECO:0007669"/>
    <property type="project" value="InterPro"/>
</dbReference>
<dbReference type="GO" id="GO:0003989">
    <property type="term" value="F:acetyl-CoA carboxylase activity"/>
    <property type="evidence" value="ECO:0007669"/>
    <property type="project" value="InterPro"/>
</dbReference>
<dbReference type="GO" id="GO:0005524">
    <property type="term" value="F:ATP binding"/>
    <property type="evidence" value="ECO:0007669"/>
    <property type="project" value="UniProtKB-KW"/>
</dbReference>
<dbReference type="GO" id="GO:0016743">
    <property type="term" value="F:carboxyl- or carbamoyltransferase activity"/>
    <property type="evidence" value="ECO:0007669"/>
    <property type="project" value="UniProtKB-UniRule"/>
</dbReference>
<dbReference type="GO" id="GO:0006633">
    <property type="term" value="P:fatty acid biosynthetic process"/>
    <property type="evidence" value="ECO:0007669"/>
    <property type="project" value="UniProtKB-KW"/>
</dbReference>
<dbReference type="GO" id="GO:2001295">
    <property type="term" value="P:malonyl-CoA biosynthetic process"/>
    <property type="evidence" value="ECO:0007669"/>
    <property type="project" value="UniProtKB-UniRule"/>
</dbReference>
<dbReference type="FunFam" id="3.90.226.10:FF:000008">
    <property type="entry name" value="Acetyl-coenzyme A carboxylase carboxyl transferase subunit alpha"/>
    <property type="match status" value="1"/>
</dbReference>
<dbReference type="Gene3D" id="3.90.226.10">
    <property type="entry name" value="2-enoyl-CoA Hydratase, Chain A, domain 1"/>
    <property type="match status" value="1"/>
</dbReference>
<dbReference type="HAMAP" id="MF_00823">
    <property type="entry name" value="AcetylCoA_CT_alpha"/>
    <property type="match status" value="1"/>
</dbReference>
<dbReference type="InterPro" id="IPR001095">
    <property type="entry name" value="Acetyl_CoA_COase_a_su"/>
</dbReference>
<dbReference type="InterPro" id="IPR029045">
    <property type="entry name" value="ClpP/crotonase-like_dom_sf"/>
</dbReference>
<dbReference type="InterPro" id="IPR011763">
    <property type="entry name" value="COA_CT_C"/>
</dbReference>
<dbReference type="NCBIfam" id="TIGR00513">
    <property type="entry name" value="accA"/>
    <property type="match status" value="1"/>
</dbReference>
<dbReference type="NCBIfam" id="NF041504">
    <property type="entry name" value="AccA_sub"/>
    <property type="match status" value="1"/>
</dbReference>
<dbReference type="NCBIfam" id="NF004344">
    <property type="entry name" value="PRK05724.1"/>
    <property type="match status" value="1"/>
</dbReference>
<dbReference type="PANTHER" id="PTHR42853">
    <property type="entry name" value="ACETYL-COENZYME A CARBOXYLASE CARBOXYL TRANSFERASE SUBUNIT ALPHA"/>
    <property type="match status" value="1"/>
</dbReference>
<dbReference type="PANTHER" id="PTHR42853:SF3">
    <property type="entry name" value="ACETYL-COENZYME A CARBOXYLASE CARBOXYL TRANSFERASE SUBUNIT ALPHA, CHLOROPLASTIC"/>
    <property type="match status" value="1"/>
</dbReference>
<dbReference type="Pfam" id="PF03255">
    <property type="entry name" value="ACCA"/>
    <property type="match status" value="1"/>
</dbReference>
<dbReference type="PRINTS" id="PR01069">
    <property type="entry name" value="ACCCTRFRASEA"/>
</dbReference>
<dbReference type="SUPFAM" id="SSF52096">
    <property type="entry name" value="ClpP/crotonase"/>
    <property type="match status" value="1"/>
</dbReference>
<dbReference type="PROSITE" id="PS50989">
    <property type="entry name" value="COA_CT_CTER"/>
    <property type="match status" value="1"/>
</dbReference>
<reference key="1">
    <citation type="journal article" date="2009" name="J. Bacteriol.">
        <title>Complete genome sequence and comparative genome analysis of enteropathogenic Escherichia coli O127:H6 strain E2348/69.</title>
        <authorList>
            <person name="Iguchi A."/>
            <person name="Thomson N.R."/>
            <person name="Ogura Y."/>
            <person name="Saunders D."/>
            <person name="Ooka T."/>
            <person name="Henderson I.R."/>
            <person name="Harris D."/>
            <person name="Asadulghani M."/>
            <person name="Kurokawa K."/>
            <person name="Dean P."/>
            <person name="Kenny B."/>
            <person name="Quail M.A."/>
            <person name="Thurston S."/>
            <person name="Dougan G."/>
            <person name="Hayashi T."/>
            <person name="Parkhill J."/>
            <person name="Frankel G."/>
        </authorList>
    </citation>
    <scope>NUCLEOTIDE SEQUENCE [LARGE SCALE GENOMIC DNA]</scope>
    <source>
        <strain>E2348/69 / EPEC</strain>
    </source>
</reference>
<comment type="function">
    <text evidence="1">Component of the acetyl coenzyme A carboxylase (ACC) complex. First, biotin carboxylase catalyzes the carboxylation of biotin on its carrier protein (BCCP) and then the CO(2) group is transferred by the carboxyltransferase to acetyl-CoA to form malonyl-CoA.</text>
</comment>
<comment type="catalytic activity">
    <reaction evidence="1">
        <text>N(6)-carboxybiotinyl-L-lysyl-[protein] + acetyl-CoA = N(6)-biotinyl-L-lysyl-[protein] + malonyl-CoA</text>
        <dbReference type="Rhea" id="RHEA:54728"/>
        <dbReference type="Rhea" id="RHEA-COMP:10505"/>
        <dbReference type="Rhea" id="RHEA-COMP:10506"/>
        <dbReference type="ChEBI" id="CHEBI:57288"/>
        <dbReference type="ChEBI" id="CHEBI:57384"/>
        <dbReference type="ChEBI" id="CHEBI:83144"/>
        <dbReference type="ChEBI" id="CHEBI:83145"/>
        <dbReference type="EC" id="2.1.3.15"/>
    </reaction>
</comment>
<comment type="pathway">
    <text evidence="1">Lipid metabolism; malonyl-CoA biosynthesis; malonyl-CoA from acetyl-CoA: step 1/1.</text>
</comment>
<comment type="subunit">
    <text evidence="1">Acetyl-CoA carboxylase is a heterohexamer composed of biotin carboxyl carrier protein (AccB), biotin carboxylase (AccC) and two subunits each of ACCase subunit alpha (AccA) and ACCase subunit beta (AccD).</text>
</comment>
<comment type="subcellular location">
    <subcellularLocation>
        <location evidence="1">Cytoplasm</location>
    </subcellularLocation>
</comment>
<comment type="similarity">
    <text evidence="1">Belongs to the AccA family.</text>
</comment>
<proteinExistence type="inferred from homology"/>